<accession>Q38UR9</accession>
<evidence type="ECO:0000255" key="1">
    <source>
        <dbReference type="HAMAP-Rule" id="MF_01342"/>
    </source>
</evidence>
<evidence type="ECO:0000305" key="2"/>
<feature type="chain" id="PRO_0000062122" description="Large ribosomal subunit protein uL16">
    <location>
        <begin position="1"/>
        <end position="144"/>
    </location>
</feature>
<reference key="1">
    <citation type="journal article" date="2005" name="Nat. Biotechnol.">
        <title>The complete genome sequence of the meat-borne lactic acid bacterium Lactobacillus sakei 23K.</title>
        <authorList>
            <person name="Chaillou S."/>
            <person name="Champomier-Verges M.-C."/>
            <person name="Cornet M."/>
            <person name="Crutz-Le Coq A.-M."/>
            <person name="Dudez A.-M."/>
            <person name="Martin V."/>
            <person name="Beaufils S."/>
            <person name="Darbon-Rongere E."/>
            <person name="Bossy R."/>
            <person name="Loux V."/>
            <person name="Zagorec M."/>
        </authorList>
    </citation>
    <scope>NUCLEOTIDE SEQUENCE [LARGE SCALE GENOMIC DNA]</scope>
    <source>
        <strain>23K</strain>
    </source>
</reference>
<protein>
    <recommendedName>
        <fullName evidence="1">Large ribosomal subunit protein uL16</fullName>
    </recommendedName>
    <alternativeName>
        <fullName evidence="2">50S ribosomal protein L16</fullName>
    </alternativeName>
</protein>
<dbReference type="EMBL" id="CR936503">
    <property type="protein sequence ID" value="CAI56065.1"/>
    <property type="molecule type" value="Genomic_DNA"/>
</dbReference>
<dbReference type="RefSeq" id="WP_011375443.1">
    <property type="nucleotide sequence ID" value="NC_007576.1"/>
</dbReference>
<dbReference type="SMR" id="Q38UR9"/>
<dbReference type="STRING" id="314315.LCA_1757"/>
<dbReference type="GeneID" id="57132674"/>
<dbReference type="KEGG" id="lsa:LCA_1757"/>
<dbReference type="eggNOG" id="COG0197">
    <property type="taxonomic scope" value="Bacteria"/>
</dbReference>
<dbReference type="HOGENOM" id="CLU_078858_2_1_9"/>
<dbReference type="OrthoDB" id="9802589at2"/>
<dbReference type="Proteomes" id="UP000002707">
    <property type="component" value="Chromosome"/>
</dbReference>
<dbReference type="GO" id="GO:0022625">
    <property type="term" value="C:cytosolic large ribosomal subunit"/>
    <property type="evidence" value="ECO:0007669"/>
    <property type="project" value="TreeGrafter"/>
</dbReference>
<dbReference type="GO" id="GO:0019843">
    <property type="term" value="F:rRNA binding"/>
    <property type="evidence" value="ECO:0007669"/>
    <property type="project" value="UniProtKB-UniRule"/>
</dbReference>
<dbReference type="GO" id="GO:0003735">
    <property type="term" value="F:structural constituent of ribosome"/>
    <property type="evidence" value="ECO:0007669"/>
    <property type="project" value="InterPro"/>
</dbReference>
<dbReference type="GO" id="GO:0000049">
    <property type="term" value="F:tRNA binding"/>
    <property type="evidence" value="ECO:0007669"/>
    <property type="project" value="UniProtKB-KW"/>
</dbReference>
<dbReference type="GO" id="GO:0006412">
    <property type="term" value="P:translation"/>
    <property type="evidence" value="ECO:0007669"/>
    <property type="project" value="UniProtKB-UniRule"/>
</dbReference>
<dbReference type="CDD" id="cd01433">
    <property type="entry name" value="Ribosomal_L16_L10e"/>
    <property type="match status" value="1"/>
</dbReference>
<dbReference type="FunFam" id="3.90.1170.10:FF:000001">
    <property type="entry name" value="50S ribosomal protein L16"/>
    <property type="match status" value="1"/>
</dbReference>
<dbReference type="Gene3D" id="3.90.1170.10">
    <property type="entry name" value="Ribosomal protein L10e/L16"/>
    <property type="match status" value="1"/>
</dbReference>
<dbReference type="HAMAP" id="MF_01342">
    <property type="entry name" value="Ribosomal_uL16"/>
    <property type="match status" value="1"/>
</dbReference>
<dbReference type="InterPro" id="IPR047873">
    <property type="entry name" value="Ribosomal_uL16"/>
</dbReference>
<dbReference type="InterPro" id="IPR000114">
    <property type="entry name" value="Ribosomal_uL16_bact-type"/>
</dbReference>
<dbReference type="InterPro" id="IPR020798">
    <property type="entry name" value="Ribosomal_uL16_CS"/>
</dbReference>
<dbReference type="InterPro" id="IPR016180">
    <property type="entry name" value="Ribosomal_uL16_dom"/>
</dbReference>
<dbReference type="InterPro" id="IPR036920">
    <property type="entry name" value="Ribosomal_uL16_sf"/>
</dbReference>
<dbReference type="NCBIfam" id="TIGR01164">
    <property type="entry name" value="rplP_bact"/>
    <property type="match status" value="1"/>
</dbReference>
<dbReference type="PANTHER" id="PTHR12220">
    <property type="entry name" value="50S/60S RIBOSOMAL PROTEIN L16"/>
    <property type="match status" value="1"/>
</dbReference>
<dbReference type="PANTHER" id="PTHR12220:SF13">
    <property type="entry name" value="LARGE RIBOSOMAL SUBUNIT PROTEIN UL16M"/>
    <property type="match status" value="1"/>
</dbReference>
<dbReference type="Pfam" id="PF00252">
    <property type="entry name" value="Ribosomal_L16"/>
    <property type="match status" value="1"/>
</dbReference>
<dbReference type="PRINTS" id="PR00060">
    <property type="entry name" value="RIBOSOMALL16"/>
</dbReference>
<dbReference type="SUPFAM" id="SSF54686">
    <property type="entry name" value="Ribosomal protein L16p/L10e"/>
    <property type="match status" value="1"/>
</dbReference>
<dbReference type="PROSITE" id="PS00586">
    <property type="entry name" value="RIBOSOMAL_L16_1"/>
    <property type="match status" value="1"/>
</dbReference>
<dbReference type="PROSITE" id="PS00701">
    <property type="entry name" value="RIBOSOMAL_L16_2"/>
    <property type="match status" value="1"/>
</dbReference>
<keyword id="KW-1185">Reference proteome</keyword>
<keyword id="KW-0687">Ribonucleoprotein</keyword>
<keyword id="KW-0689">Ribosomal protein</keyword>
<keyword id="KW-0694">RNA-binding</keyword>
<keyword id="KW-0699">rRNA-binding</keyword>
<keyword id="KW-0820">tRNA-binding</keyword>
<gene>
    <name evidence="1" type="primary">rplP</name>
    <name type="ordered locus">LCA_1757</name>
</gene>
<organism>
    <name type="scientific">Latilactobacillus sakei subsp. sakei (strain 23K)</name>
    <name type="common">Lactobacillus sakei subsp. sakei</name>
    <dbReference type="NCBI Taxonomy" id="314315"/>
    <lineage>
        <taxon>Bacteria</taxon>
        <taxon>Bacillati</taxon>
        <taxon>Bacillota</taxon>
        <taxon>Bacilli</taxon>
        <taxon>Lactobacillales</taxon>
        <taxon>Lactobacillaceae</taxon>
        <taxon>Latilactobacillus</taxon>
    </lineage>
</organism>
<sequence length="144" mass="15965">MLVPKRVKHRREFRGKMRGAAKGGKEVTFGEFGLQALESSWITNRQIEAARVAMTRYMKRGGKVWIKIFPHKSYTAKGVGVRMGSGKGAPAGWVAVVKREKIMFEIGGVSEEVAREALRLASHKLPVKTKIVKREEVGGESNEG</sequence>
<name>RL16_LATSS</name>
<proteinExistence type="inferred from homology"/>
<comment type="function">
    <text evidence="1">Binds 23S rRNA and is also seen to make contacts with the A and possibly P site tRNAs.</text>
</comment>
<comment type="subunit">
    <text evidence="1">Part of the 50S ribosomal subunit.</text>
</comment>
<comment type="similarity">
    <text evidence="1">Belongs to the universal ribosomal protein uL16 family.</text>
</comment>